<proteinExistence type="inferred from homology"/>
<protein>
    <recommendedName>
        <fullName evidence="1">Dual-specificity RNA methyltransferase RlmN</fullName>
        <ecNumber evidence="1">2.1.1.192</ecNumber>
    </recommendedName>
    <alternativeName>
        <fullName evidence="1">23S rRNA (adenine(2503)-C(2))-methyltransferase</fullName>
    </alternativeName>
    <alternativeName>
        <fullName evidence="1">23S rRNA m2A2503 methyltransferase</fullName>
    </alternativeName>
    <alternativeName>
        <fullName evidence="1">Ribosomal RNA large subunit methyltransferase N</fullName>
    </alternativeName>
    <alternativeName>
        <fullName evidence="1">tRNA (adenine(37)-C(2))-methyltransferase</fullName>
    </alternativeName>
    <alternativeName>
        <fullName evidence="1">tRNA m2A37 methyltransferase</fullName>
    </alternativeName>
</protein>
<dbReference type="EC" id="2.1.1.192" evidence="1"/>
<dbReference type="EMBL" id="CP000076">
    <property type="protein sequence ID" value="AAY94186.1"/>
    <property type="molecule type" value="Genomic_DNA"/>
</dbReference>
<dbReference type="RefSeq" id="WP_011063210.1">
    <property type="nucleotide sequence ID" value="NC_004129.6"/>
</dbReference>
<dbReference type="SMR" id="Q4K6U6"/>
<dbReference type="STRING" id="220664.PFL_4957"/>
<dbReference type="GeneID" id="57477939"/>
<dbReference type="KEGG" id="pfl:PFL_4957"/>
<dbReference type="PATRIC" id="fig|220664.5.peg.5078"/>
<dbReference type="eggNOG" id="COG0820">
    <property type="taxonomic scope" value="Bacteria"/>
</dbReference>
<dbReference type="HOGENOM" id="CLU_029101_0_0_6"/>
<dbReference type="Proteomes" id="UP000008540">
    <property type="component" value="Chromosome"/>
</dbReference>
<dbReference type="GO" id="GO:0005737">
    <property type="term" value="C:cytoplasm"/>
    <property type="evidence" value="ECO:0007669"/>
    <property type="project" value="UniProtKB-SubCell"/>
</dbReference>
<dbReference type="GO" id="GO:0051539">
    <property type="term" value="F:4 iron, 4 sulfur cluster binding"/>
    <property type="evidence" value="ECO:0007669"/>
    <property type="project" value="UniProtKB-UniRule"/>
</dbReference>
<dbReference type="GO" id="GO:0046872">
    <property type="term" value="F:metal ion binding"/>
    <property type="evidence" value="ECO:0007669"/>
    <property type="project" value="UniProtKB-KW"/>
</dbReference>
<dbReference type="GO" id="GO:0070040">
    <property type="term" value="F:rRNA (adenine(2503)-C2-)-methyltransferase activity"/>
    <property type="evidence" value="ECO:0007669"/>
    <property type="project" value="UniProtKB-UniRule"/>
</dbReference>
<dbReference type="GO" id="GO:0019843">
    <property type="term" value="F:rRNA binding"/>
    <property type="evidence" value="ECO:0007669"/>
    <property type="project" value="UniProtKB-UniRule"/>
</dbReference>
<dbReference type="GO" id="GO:0002935">
    <property type="term" value="F:tRNA (adenine(37)-C2)-methyltransferase activity"/>
    <property type="evidence" value="ECO:0007669"/>
    <property type="project" value="UniProtKB-UniRule"/>
</dbReference>
<dbReference type="GO" id="GO:0000049">
    <property type="term" value="F:tRNA binding"/>
    <property type="evidence" value="ECO:0007669"/>
    <property type="project" value="UniProtKB-UniRule"/>
</dbReference>
<dbReference type="GO" id="GO:0070475">
    <property type="term" value="P:rRNA base methylation"/>
    <property type="evidence" value="ECO:0007669"/>
    <property type="project" value="UniProtKB-UniRule"/>
</dbReference>
<dbReference type="GO" id="GO:0030488">
    <property type="term" value="P:tRNA methylation"/>
    <property type="evidence" value="ECO:0007669"/>
    <property type="project" value="UniProtKB-UniRule"/>
</dbReference>
<dbReference type="CDD" id="cd01335">
    <property type="entry name" value="Radical_SAM"/>
    <property type="match status" value="1"/>
</dbReference>
<dbReference type="FunFam" id="1.10.150.530:FF:000003">
    <property type="entry name" value="Dual-specificity RNA methyltransferase RlmN"/>
    <property type="match status" value="1"/>
</dbReference>
<dbReference type="FunFam" id="3.20.20.70:FF:000008">
    <property type="entry name" value="Dual-specificity RNA methyltransferase RlmN"/>
    <property type="match status" value="1"/>
</dbReference>
<dbReference type="Gene3D" id="1.10.150.530">
    <property type="match status" value="1"/>
</dbReference>
<dbReference type="Gene3D" id="3.20.20.70">
    <property type="entry name" value="Aldolase class I"/>
    <property type="match status" value="1"/>
</dbReference>
<dbReference type="HAMAP" id="MF_01849">
    <property type="entry name" value="RNA_methyltr_RlmN"/>
    <property type="match status" value="1"/>
</dbReference>
<dbReference type="InterPro" id="IPR013785">
    <property type="entry name" value="Aldolase_TIM"/>
</dbReference>
<dbReference type="InterPro" id="IPR040072">
    <property type="entry name" value="Methyltransferase_A"/>
</dbReference>
<dbReference type="InterPro" id="IPR048641">
    <property type="entry name" value="RlmN_N"/>
</dbReference>
<dbReference type="InterPro" id="IPR027492">
    <property type="entry name" value="RNA_MTrfase_RlmN"/>
</dbReference>
<dbReference type="InterPro" id="IPR004383">
    <property type="entry name" value="rRNA_lsu_MTrfase_RlmN/Cfr"/>
</dbReference>
<dbReference type="InterPro" id="IPR007197">
    <property type="entry name" value="rSAM"/>
</dbReference>
<dbReference type="NCBIfam" id="TIGR00048">
    <property type="entry name" value="rRNA_mod_RlmN"/>
    <property type="match status" value="1"/>
</dbReference>
<dbReference type="PANTHER" id="PTHR30544">
    <property type="entry name" value="23S RRNA METHYLTRANSFERASE"/>
    <property type="match status" value="1"/>
</dbReference>
<dbReference type="PANTHER" id="PTHR30544:SF5">
    <property type="entry name" value="RADICAL SAM CORE DOMAIN-CONTAINING PROTEIN"/>
    <property type="match status" value="1"/>
</dbReference>
<dbReference type="Pfam" id="PF04055">
    <property type="entry name" value="Radical_SAM"/>
    <property type="match status" value="1"/>
</dbReference>
<dbReference type="Pfam" id="PF21016">
    <property type="entry name" value="RlmN_N"/>
    <property type="match status" value="1"/>
</dbReference>
<dbReference type="PIRSF" id="PIRSF006004">
    <property type="entry name" value="CHP00048"/>
    <property type="match status" value="1"/>
</dbReference>
<dbReference type="SFLD" id="SFLDF00275">
    <property type="entry name" value="adenosine_C2_methyltransferase"/>
    <property type="match status" value="1"/>
</dbReference>
<dbReference type="SFLD" id="SFLDS00029">
    <property type="entry name" value="Radical_SAM"/>
    <property type="match status" value="1"/>
</dbReference>
<dbReference type="SUPFAM" id="SSF102114">
    <property type="entry name" value="Radical SAM enzymes"/>
    <property type="match status" value="1"/>
</dbReference>
<dbReference type="PROSITE" id="PS51918">
    <property type="entry name" value="RADICAL_SAM"/>
    <property type="match status" value="1"/>
</dbReference>
<name>RLMN_PSEF5</name>
<feature type="chain" id="PRO_0000350336" description="Dual-specificity RNA methyltransferase RlmN">
    <location>
        <begin position="1"/>
        <end position="382"/>
    </location>
</feature>
<feature type="domain" description="Radical SAM core" evidence="2">
    <location>
        <begin position="102"/>
        <end position="342"/>
    </location>
</feature>
<feature type="active site" description="Proton acceptor" evidence="1">
    <location>
        <position position="96"/>
    </location>
</feature>
<feature type="active site" description="S-methylcysteine intermediate" evidence="1">
    <location>
        <position position="345"/>
    </location>
</feature>
<feature type="binding site" evidence="1">
    <location>
        <position position="116"/>
    </location>
    <ligand>
        <name>[4Fe-4S] cluster</name>
        <dbReference type="ChEBI" id="CHEBI:49883"/>
        <note>4Fe-4S-S-AdoMet</note>
    </ligand>
</feature>
<feature type="binding site" evidence="1">
    <location>
        <position position="120"/>
    </location>
    <ligand>
        <name>[4Fe-4S] cluster</name>
        <dbReference type="ChEBI" id="CHEBI:49883"/>
        <note>4Fe-4S-S-AdoMet</note>
    </ligand>
</feature>
<feature type="binding site" evidence="1">
    <location>
        <position position="123"/>
    </location>
    <ligand>
        <name>[4Fe-4S] cluster</name>
        <dbReference type="ChEBI" id="CHEBI:49883"/>
        <note>4Fe-4S-S-AdoMet</note>
    </ligand>
</feature>
<feature type="binding site" evidence="1">
    <location>
        <begin position="170"/>
        <end position="171"/>
    </location>
    <ligand>
        <name>S-adenosyl-L-methionine</name>
        <dbReference type="ChEBI" id="CHEBI:59789"/>
    </ligand>
</feature>
<feature type="binding site" evidence="1">
    <location>
        <position position="202"/>
    </location>
    <ligand>
        <name>S-adenosyl-L-methionine</name>
        <dbReference type="ChEBI" id="CHEBI:59789"/>
    </ligand>
</feature>
<feature type="binding site" evidence="1">
    <location>
        <begin position="224"/>
        <end position="226"/>
    </location>
    <ligand>
        <name>S-adenosyl-L-methionine</name>
        <dbReference type="ChEBI" id="CHEBI:59789"/>
    </ligand>
</feature>
<feature type="binding site" evidence="1">
    <location>
        <position position="302"/>
    </location>
    <ligand>
        <name>S-adenosyl-L-methionine</name>
        <dbReference type="ChEBI" id="CHEBI:59789"/>
    </ligand>
</feature>
<feature type="disulfide bond" description="(transient)" evidence="1">
    <location>
        <begin position="109"/>
        <end position="345"/>
    </location>
</feature>
<comment type="function">
    <text evidence="1">Specifically methylates position 2 of adenine 2503 in 23S rRNA and position 2 of adenine 37 in tRNAs. m2A2503 modification seems to play a crucial role in the proofreading step occurring at the peptidyl transferase center and thus would serve to optimize ribosomal fidelity.</text>
</comment>
<comment type="catalytic activity">
    <reaction evidence="1">
        <text>adenosine(2503) in 23S rRNA + 2 reduced [2Fe-2S]-[ferredoxin] + 2 S-adenosyl-L-methionine = 2-methyladenosine(2503) in 23S rRNA + 5'-deoxyadenosine + L-methionine + 2 oxidized [2Fe-2S]-[ferredoxin] + S-adenosyl-L-homocysteine</text>
        <dbReference type="Rhea" id="RHEA:42916"/>
        <dbReference type="Rhea" id="RHEA-COMP:10000"/>
        <dbReference type="Rhea" id="RHEA-COMP:10001"/>
        <dbReference type="Rhea" id="RHEA-COMP:10152"/>
        <dbReference type="Rhea" id="RHEA-COMP:10282"/>
        <dbReference type="ChEBI" id="CHEBI:17319"/>
        <dbReference type="ChEBI" id="CHEBI:33737"/>
        <dbReference type="ChEBI" id="CHEBI:33738"/>
        <dbReference type="ChEBI" id="CHEBI:57844"/>
        <dbReference type="ChEBI" id="CHEBI:57856"/>
        <dbReference type="ChEBI" id="CHEBI:59789"/>
        <dbReference type="ChEBI" id="CHEBI:74411"/>
        <dbReference type="ChEBI" id="CHEBI:74497"/>
        <dbReference type="EC" id="2.1.1.192"/>
    </reaction>
</comment>
<comment type="catalytic activity">
    <reaction evidence="1">
        <text>adenosine(37) in tRNA + 2 reduced [2Fe-2S]-[ferredoxin] + 2 S-adenosyl-L-methionine = 2-methyladenosine(37) in tRNA + 5'-deoxyadenosine + L-methionine + 2 oxidized [2Fe-2S]-[ferredoxin] + S-adenosyl-L-homocysteine</text>
        <dbReference type="Rhea" id="RHEA:43332"/>
        <dbReference type="Rhea" id="RHEA-COMP:10000"/>
        <dbReference type="Rhea" id="RHEA-COMP:10001"/>
        <dbReference type="Rhea" id="RHEA-COMP:10162"/>
        <dbReference type="Rhea" id="RHEA-COMP:10485"/>
        <dbReference type="ChEBI" id="CHEBI:17319"/>
        <dbReference type="ChEBI" id="CHEBI:33737"/>
        <dbReference type="ChEBI" id="CHEBI:33738"/>
        <dbReference type="ChEBI" id="CHEBI:57844"/>
        <dbReference type="ChEBI" id="CHEBI:57856"/>
        <dbReference type="ChEBI" id="CHEBI:59789"/>
        <dbReference type="ChEBI" id="CHEBI:74411"/>
        <dbReference type="ChEBI" id="CHEBI:74497"/>
        <dbReference type="EC" id="2.1.1.192"/>
    </reaction>
</comment>
<comment type="cofactor">
    <cofactor evidence="1">
        <name>[4Fe-4S] cluster</name>
        <dbReference type="ChEBI" id="CHEBI:49883"/>
    </cofactor>
    <text evidence="1">Binds 1 [4Fe-4S] cluster. The cluster is coordinated with 3 cysteines and an exchangeable S-adenosyl-L-methionine.</text>
</comment>
<comment type="subcellular location">
    <subcellularLocation>
        <location evidence="1">Cytoplasm</location>
    </subcellularLocation>
</comment>
<comment type="miscellaneous">
    <text evidence="1">Reaction proceeds by a ping-pong mechanism involving intermediate methylation of a conserved cysteine residue.</text>
</comment>
<comment type="similarity">
    <text evidence="1">Belongs to the radical SAM superfamily. RlmN family.</text>
</comment>
<accession>Q4K6U6</accession>
<sequence length="382" mass="42147">MTASIGKTNLLGLTQPEMEKFFDSIGEKRFRAGQVMKWIHHFGVDDFDAMTNVGKALREKLKAVAEIRGPEVVSEDISSDGTRKWVVRVASGSCVETVYIPQGKRGTLCVSSQAGCALDCSFCSTGKQGFNSNLTAAEVIGQVWIANKSFGSVPATVDRAITNVVMMGMGEPLLNFDNVIAAMHLMMDDLGYGISKRRVTLSTSGVVPMIDELAKHIDVSLALSLHAPNDALRNQLVPINKKYPLKMLLESCQRYMSALGEKRVLTIEYTLLKDVNDKLEHAVEMIELLKDVPCKINLIPFNPFPHSGYERPSNNAIRRFQDQLHHAGFNVTVRTTRGEDIDAACGQLVGQVLDRTRRSERYIAVRELSADADMPQSAATRT</sequence>
<gene>
    <name evidence="1" type="primary">rlmN</name>
    <name type="ordered locus">PFL_4957</name>
</gene>
<organism>
    <name type="scientific">Pseudomonas fluorescens (strain ATCC BAA-477 / NRRL B-23932 / Pf-5)</name>
    <dbReference type="NCBI Taxonomy" id="220664"/>
    <lineage>
        <taxon>Bacteria</taxon>
        <taxon>Pseudomonadati</taxon>
        <taxon>Pseudomonadota</taxon>
        <taxon>Gammaproteobacteria</taxon>
        <taxon>Pseudomonadales</taxon>
        <taxon>Pseudomonadaceae</taxon>
        <taxon>Pseudomonas</taxon>
    </lineage>
</organism>
<evidence type="ECO:0000255" key="1">
    <source>
        <dbReference type="HAMAP-Rule" id="MF_01849"/>
    </source>
</evidence>
<evidence type="ECO:0000255" key="2">
    <source>
        <dbReference type="PROSITE-ProRule" id="PRU01266"/>
    </source>
</evidence>
<keyword id="KW-0004">4Fe-4S</keyword>
<keyword id="KW-0963">Cytoplasm</keyword>
<keyword id="KW-1015">Disulfide bond</keyword>
<keyword id="KW-0408">Iron</keyword>
<keyword id="KW-0411">Iron-sulfur</keyword>
<keyword id="KW-0479">Metal-binding</keyword>
<keyword id="KW-0489">Methyltransferase</keyword>
<keyword id="KW-0698">rRNA processing</keyword>
<keyword id="KW-0949">S-adenosyl-L-methionine</keyword>
<keyword id="KW-0808">Transferase</keyword>
<keyword id="KW-0819">tRNA processing</keyword>
<reference key="1">
    <citation type="journal article" date="2005" name="Nat. Biotechnol.">
        <title>Complete genome sequence of the plant commensal Pseudomonas fluorescens Pf-5.</title>
        <authorList>
            <person name="Paulsen I.T."/>
            <person name="Press C.M."/>
            <person name="Ravel J."/>
            <person name="Kobayashi D.Y."/>
            <person name="Myers G.S.A."/>
            <person name="Mavrodi D.V."/>
            <person name="DeBoy R.T."/>
            <person name="Seshadri R."/>
            <person name="Ren Q."/>
            <person name="Madupu R."/>
            <person name="Dodson R.J."/>
            <person name="Durkin A.S."/>
            <person name="Brinkac L.M."/>
            <person name="Daugherty S.C."/>
            <person name="Sullivan S.A."/>
            <person name="Rosovitz M.J."/>
            <person name="Gwinn M.L."/>
            <person name="Zhou L."/>
            <person name="Schneider D.J."/>
            <person name="Cartinhour S.W."/>
            <person name="Nelson W.C."/>
            <person name="Weidman J."/>
            <person name="Watkins K."/>
            <person name="Tran K."/>
            <person name="Khouri H."/>
            <person name="Pierson E.A."/>
            <person name="Pierson L.S. III"/>
            <person name="Thomashow L.S."/>
            <person name="Loper J.E."/>
        </authorList>
    </citation>
    <scope>NUCLEOTIDE SEQUENCE [LARGE SCALE GENOMIC DNA]</scope>
    <source>
        <strain>ATCC BAA-477 / NRRL B-23932 / Pf-5</strain>
    </source>
</reference>